<keyword id="KW-0067">ATP-binding</keyword>
<keyword id="KW-0238">DNA-binding</keyword>
<keyword id="KW-0479">Metal-binding</keyword>
<keyword id="KW-0547">Nucleotide-binding</keyword>
<keyword id="KW-1185">Reference proteome</keyword>
<keyword id="KW-0678">Repressor</keyword>
<keyword id="KW-0804">Transcription</keyword>
<keyword id="KW-0805">Transcription regulation</keyword>
<keyword id="KW-0862">Zinc</keyword>
<keyword id="KW-0863">Zinc-finger</keyword>
<protein>
    <recommendedName>
        <fullName evidence="1">Transcriptional repressor NrdR</fullName>
    </recommendedName>
</protein>
<name>NRDR_LIGS1</name>
<organism>
    <name type="scientific">Ligilactobacillus salivarius (strain UCC118)</name>
    <name type="common">Lactobacillus salivarius</name>
    <dbReference type="NCBI Taxonomy" id="362948"/>
    <lineage>
        <taxon>Bacteria</taxon>
        <taxon>Bacillati</taxon>
        <taxon>Bacillota</taxon>
        <taxon>Bacilli</taxon>
        <taxon>Lactobacillales</taxon>
        <taxon>Lactobacillaceae</taxon>
        <taxon>Ligilactobacillus</taxon>
    </lineage>
</organism>
<sequence>MKCPNCHKNGSRVVDSRPADNGHAIRRRRECEQCGYRFTTFERVEVTPLLVIKKNGTREEFQREKLLRGIVRAAEKRPVGIDEITEIVDKVENKLRSVGGTEVSSQLIGEYVMKILADVDEVAYIRYASVYREFKDMHAFADELRELMDREENNSKD</sequence>
<proteinExistence type="inferred from homology"/>
<feature type="chain" id="PRO_0000264184" description="Transcriptional repressor NrdR">
    <location>
        <begin position="1"/>
        <end position="157"/>
    </location>
</feature>
<feature type="domain" description="ATP-cone" evidence="1">
    <location>
        <begin position="49"/>
        <end position="139"/>
    </location>
</feature>
<feature type="zinc finger region" evidence="1">
    <location>
        <begin position="3"/>
        <end position="34"/>
    </location>
</feature>
<feature type="region of interest" description="Disordered" evidence="2">
    <location>
        <begin position="1"/>
        <end position="21"/>
    </location>
</feature>
<dbReference type="EMBL" id="CP000233">
    <property type="protein sequence ID" value="ABD99300.1"/>
    <property type="molecule type" value="Genomic_DNA"/>
</dbReference>
<dbReference type="RefSeq" id="WP_003699785.1">
    <property type="nucleotide sequence ID" value="NC_007929.1"/>
</dbReference>
<dbReference type="RefSeq" id="YP_535383.1">
    <property type="nucleotide sequence ID" value="NC_007929.1"/>
</dbReference>
<dbReference type="SMR" id="Q1WUN5"/>
<dbReference type="STRING" id="362948.LSL_0491"/>
<dbReference type="GeneID" id="89465277"/>
<dbReference type="KEGG" id="lsl:LSL_0491"/>
<dbReference type="PATRIC" id="fig|362948.14.peg.567"/>
<dbReference type="HOGENOM" id="CLU_108412_0_0_9"/>
<dbReference type="OrthoDB" id="9807461at2"/>
<dbReference type="Proteomes" id="UP000006559">
    <property type="component" value="Chromosome"/>
</dbReference>
<dbReference type="GO" id="GO:0005524">
    <property type="term" value="F:ATP binding"/>
    <property type="evidence" value="ECO:0007669"/>
    <property type="project" value="UniProtKB-KW"/>
</dbReference>
<dbReference type="GO" id="GO:0003677">
    <property type="term" value="F:DNA binding"/>
    <property type="evidence" value="ECO:0007669"/>
    <property type="project" value="UniProtKB-KW"/>
</dbReference>
<dbReference type="GO" id="GO:0008270">
    <property type="term" value="F:zinc ion binding"/>
    <property type="evidence" value="ECO:0007669"/>
    <property type="project" value="UniProtKB-UniRule"/>
</dbReference>
<dbReference type="GO" id="GO:0045892">
    <property type="term" value="P:negative regulation of DNA-templated transcription"/>
    <property type="evidence" value="ECO:0007669"/>
    <property type="project" value="UniProtKB-UniRule"/>
</dbReference>
<dbReference type="HAMAP" id="MF_00440">
    <property type="entry name" value="NrdR"/>
    <property type="match status" value="1"/>
</dbReference>
<dbReference type="InterPro" id="IPR005144">
    <property type="entry name" value="ATP-cone_dom"/>
</dbReference>
<dbReference type="InterPro" id="IPR055173">
    <property type="entry name" value="NrdR-like_N"/>
</dbReference>
<dbReference type="InterPro" id="IPR003796">
    <property type="entry name" value="RNR_NrdR-like"/>
</dbReference>
<dbReference type="NCBIfam" id="TIGR00244">
    <property type="entry name" value="transcriptional regulator NrdR"/>
    <property type="match status" value="1"/>
</dbReference>
<dbReference type="PANTHER" id="PTHR30455">
    <property type="entry name" value="TRANSCRIPTIONAL REPRESSOR NRDR"/>
    <property type="match status" value="1"/>
</dbReference>
<dbReference type="PANTHER" id="PTHR30455:SF2">
    <property type="entry name" value="TRANSCRIPTIONAL REPRESSOR NRDR"/>
    <property type="match status" value="1"/>
</dbReference>
<dbReference type="Pfam" id="PF03477">
    <property type="entry name" value="ATP-cone"/>
    <property type="match status" value="1"/>
</dbReference>
<dbReference type="Pfam" id="PF22811">
    <property type="entry name" value="Zn_ribbon_NrdR"/>
    <property type="match status" value="1"/>
</dbReference>
<dbReference type="PROSITE" id="PS51161">
    <property type="entry name" value="ATP_CONE"/>
    <property type="match status" value="1"/>
</dbReference>
<gene>
    <name evidence="1" type="primary">nrdR</name>
    <name type="ordered locus">LSL_0491</name>
</gene>
<accession>Q1WUN5</accession>
<comment type="function">
    <text evidence="1">Negatively regulates transcription of bacterial ribonucleotide reductase nrd genes and operons by binding to NrdR-boxes.</text>
</comment>
<comment type="cofactor">
    <cofactor evidence="1">
        <name>Zn(2+)</name>
        <dbReference type="ChEBI" id="CHEBI:29105"/>
    </cofactor>
    <text evidence="1">Binds 1 zinc ion.</text>
</comment>
<comment type="similarity">
    <text evidence="1">Belongs to the NrdR family.</text>
</comment>
<reference key="1">
    <citation type="journal article" date="2006" name="Proc. Natl. Acad. Sci. U.S.A.">
        <title>Multireplicon genome architecture of Lactobacillus salivarius.</title>
        <authorList>
            <person name="Claesson M.J."/>
            <person name="Li Y."/>
            <person name="Leahy S."/>
            <person name="Canchaya C."/>
            <person name="van Pijkeren J.P."/>
            <person name="Cerdeno-Tarraga A.M."/>
            <person name="Parkhill J."/>
            <person name="Flynn S."/>
            <person name="O'Sullivan G.C."/>
            <person name="Collins J.K."/>
            <person name="Higgins D."/>
            <person name="Shanahan F."/>
            <person name="Fitzgerald G.F."/>
            <person name="van Sinderen D."/>
            <person name="O'Toole P.W."/>
        </authorList>
    </citation>
    <scope>NUCLEOTIDE SEQUENCE [LARGE SCALE GENOMIC DNA]</scope>
    <source>
        <strain>UCC118</strain>
    </source>
</reference>
<evidence type="ECO:0000255" key="1">
    <source>
        <dbReference type="HAMAP-Rule" id="MF_00440"/>
    </source>
</evidence>
<evidence type="ECO:0000256" key="2">
    <source>
        <dbReference type="SAM" id="MobiDB-lite"/>
    </source>
</evidence>